<proteinExistence type="evidence at protein level"/>
<feature type="chain" id="PRO_0000372859" description="Cyclin-dependent kinase 12">
    <location>
        <begin position="1"/>
        <end position="1157"/>
    </location>
</feature>
<feature type="domain" description="Protein kinase" evidence="1">
    <location>
        <begin position="804"/>
        <end position="1098"/>
    </location>
</feature>
<feature type="region of interest" description="Disordered" evidence="3">
    <location>
        <begin position="15"/>
        <end position="540"/>
    </location>
</feature>
<feature type="region of interest" description="Disordered" evidence="3">
    <location>
        <begin position="574"/>
        <end position="661"/>
    </location>
</feature>
<feature type="region of interest" description="Disordered" evidence="3">
    <location>
        <begin position="675"/>
        <end position="782"/>
    </location>
</feature>
<feature type="compositionally biased region" description="Acidic residues" evidence="3">
    <location>
        <begin position="18"/>
        <end position="32"/>
    </location>
</feature>
<feature type="compositionally biased region" description="Basic and acidic residues" evidence="3">
    <location>
        <begin position="55"/>
        <end position="76"/>
    </location>
</feature>
<feature type="compositionally biased region" description="Polar residues" evidence="3">
    <location>
        <begin position="85"/>
        <end position="94"/>
    </location>
</feature>
<feature type="compositionally biased region" description="Basic residues" evidence="3">
    <location>
        <begin position="134"/>
        <end position="162"/>
    </location>
</feature>
<feature type="compositionally biased region" description="Low complexity" evidence="3">
    <location>
        <begin position="163"/>
        <end position="176"/>
    </location>
</feature>
<feature type="compositionally biased region" description="Polar residues" evidence="3">
    <location>
        <begin position="189"/>
        <end position="215"/>
    </location>
</feature>
<feature type="compositionally biased region" description="Polar residues" evidence="3">
    <location>
        <begin position="224"/>
        <end position="255"/>
    </location>
</feature>
<feature type="compositionally biased region" description="Low complexity" evidence="3">
    <location>
        <begin position="256"/>
        <end position="281"/>
    </location>
</feature>
<feature type="compositionally biased region" description="Basic and acidic residues" evidence="3">
    <location>
        <begin position="315"/>
        <end position="332"/>
    </location>
</feature>
<feature type="compositionally biased region" description="Basic and acidic residues" evidence="3">
    <location>
        <begin position="392"/>
        <end position="403"/>
    </location>
</feature>
<feature type="compositionally biased region" description="Low complexity" evidence="3">
    <location>
        <begin position="408"/>
        <end position="422"/>
    </location>
</feature>
<feature type="compositionally biased region" description="Polar residues" evidence="3">
    <location>
        <begin position="444"/>
        <end position="468"/>
    </location>
</feature>
<feature type="compositionally biased region" description="Low complexity" evidence="3">
    <location>
        <begin position="473"/>
        <end position="484"/>
    </location>
</feature>
<feature type="compositionally biased region" description="Basic residues" evidence="3">
    <location>
        <begin position="495"/>
        <end position="508"/>
    </location>
</feature>
<feature type="compositionally biased region" description="Low complexity" evidence="3">
    <location>
        <begin position="518"/>
        <end position="533"/>
    </location>
</feature>
<feature type="compositionally biased region" description="Polar residues" evidence="3">
    <location>
        <begin position="586"/>
        <end position="603"/>
    </location>
</feature>
<feature type="compositionally biased region" description="Low complexity" evidence="3">
    <location>
        <begin position="609"/>
        <end position="623"/>
    </location>
</feature>
<feature type="compositionally biased region" description="Polar residues" evidence="3">
    <location>
        <begin position="644"/>
        <end position="656"/>
    </location>
</feature>
<feature type="compositionally biased region" description="Polar residues" evidence="3">
    <location>
        <begin position="721"/>
        <end position="731"/>
    </location>
</feature>
<feature type="compositionally biased region" description="Acidic residues" evidence="3">
    <location>
        <begin position="746"/>
        <end position="760"/>
    </location>
</feature>
<feature type="active site" description="Proton acceptor" evidence="1 2">
    <location>
        <position position="936"/>
    </location>
</feature>
<feature type="binding site" evidence="1">
    <location>
        <begin position="810"/>
        <end position="818"/>
    </location>
    <ligand>
        <name>ATP</name>
        <dbReference type="ChEBI" id="CHEBI:30616"/>
    </ligand>
</feature>
<feature type="binding site" evidence="1">
    <location>
        <position position="833"/>
    </location>
    <ligand>
        <name>ATP</name>
        <dbReference type="ChEBI" id="CHEBI:30616"/>
    </ligand>
</feature>
<feature type="binding site" evidence="1">
    <location>
        <begin position="891"/>
        <end position="896"/>
    </location>
    <ligand>
        <name>ATP</name>
        <dbReference type="ChEBI" id="CHEBI:30616"/>
    </ligand>
</feature>
<feature type="binding site" evidence="1">
    <location>
        <position position="1118"/>
    </location>
    <ligand>
        <name>ATP</name>
        <dbReference type="ChEBI" id="CHEBI:30616"/>
    </ligand>
</feature>
<feature type="modified residue" description="Phosphothreonine" evidence="5">
    <location>
        <position position="106"/>
    </location>
</feature>
<feature type="modified residue" description="Phosphothreonine" evidence="5">
    <location>
        <position position="184"/>
    </location>
</feature>
<feature type="modified residue" description="Phosphoserine" evidence="5">
    <location>
        <position position="190"/>
    </location>
</feature>
<feature type="modified residue" description="Phosphoserine" evidence="5">
    <location>
        <position position="192"/>
    </location>
</feature>
<feature type="modified residue" description="Phosphothreonine" evidence="5">
    <location>
        <position position="217"/>
    </location>
</feature>
<feature type="modified residue" description="Phosphoserine" evidence="5">
    <location>
        <position position="280"/>
    </location>
</feature>
<feature type="modified residue" description="Phosphothreonine" evidence="5">
    <location>
        <position position="283"/>
    </location>
</feature>
<feature type="modified residue" description="Phosphoserine" evidence="5">
    <location>
        <position position="291"/>
    </location>
</feature>
<feature type="modified residue" description="Phosphoserine" evidence="5">
    <location>
        <position position="301"/>
    </location>
</feature>
<feature type="modified residue" description="Phosphoserine" evidence="5">
    <location>
        <position position="314"/>
    </location>
</feature>
<feature type="modified residue" description="Phosphoserine" evidence="5">
    <location>
        <position position="353"/>
    </location>
</feature>
<feature type="modified residue" description="Phosphothreonine" evidence="5">
    <location>
        <position position="365"/>
    </location>
</feature>
<feature type="modified residue" description="Phosphoserine" evidence="5">
    <location>
        <position position="487"/>
    </location>
</feature>
<feature type="modified residue" description="Phosphoserine" evidence="5">
    <location>
        <position position="492"/>
    </location>
</feature>
<feature type="modified residue" description="Phosphoserine" evidence="4">
    <location>
        <position position="553"/>
    </location>
</feature>
<feature type="modified residue" description="Phosphoserine" evidence="5">
    <location>
        <position position="730"/>
    </location>
</feature>
<feature type="modified residue" description="Phosphoserine" evidence="5">
    <location>
        <position position="743"/>
    </location>
</feature>
<feature type="modified residue" description="Phosphoserine" evidence="5">
    <location>
        <position position="747"/>
    </location>
</feature>
<feature type="modified residue" description="Phosphoserine" evidence="5">
    <location>
        <position position="755"/>
    </location>
</feature>
<feature type="sequence conflict" description="In Ref. 3; AAL39951." evidence="7" ref="3">
    <original>A</original>
    <variation>V</variation>
    <location>
        <position position="188"/>
    </location>
</feature>
<feature type="sequence conflict" description="In Ref. 3; AAL28383." evidence="7" ref="3">
    <original>R</original>
    <variation>K</variation>
    <location>
        <position position="1099"/>
    </location>
</feature>
<evidence type="ECO:0000255" key="1">
    <source>
        <dbReference type="PROSITE-ProRule" id="PRU00159"/>
    </source>
</evidence>
<evidence type="ECO:0000255" key="2">
    <source>
        <dbReference type="PROSITE-ProRule" id="PRU10027"/>
    </source>
</evidence>
<evidence type="ECO:0000256" key="3">
    <source>
        <dbReference type="SAM" id="MobiDB-lite"/>
    </source>
</evidence>
<evidence type="ECO:0000269" key="4">
    <source>
    </source>
</evidence>
<evidence type="ECO:0000269" key="5">
    <source>
    </source>
</evidence>
<evidence type="ECO:0000269" key="6">
    <source>
    </source>
</evidence>
<evidence type="ECO:0000305" key="7"/>
<name>CDK12_DROME</name>
<organism>
    <name type="scientific">Drosophila melanogaster</name>
    <name type="common">Fruit fly</name>
    <dbReference type="NCBI Taxonomy" id="7227"/>
    <lineage>
        <taxon>Eukaryota</taxon>
        <taxon>Metazoa</taxon>
        <taxon>Ecdysozoa</taxon>
        <taxon>Arthropoda</taxon>
        <taxon>Hexapoda</taxon>
        <taxon>Insecta</taxon>
        <taxon>Pterygota</taxon>
        <taxon>Neoptera</taxon>
        <taxon>Endopterygota</taxon>
        <taxon>Diptera</taxon>
        <taxon>Brachycera</taxon>
        <taxon>Muscomorpha</taxon>
        <taxon>Ephydroidea</taxon>
        <taxon>Drosophilidae</taxon>
        <taxon>Drosophila</taxon>
        <taxon>Sophophora</taxon>
    </lineage>
</organism>
<accession>Q9VP22</accession>
<accession>Q8T9E1</accession>
<accession>Q95SE1</accession>
<reference key="1">
    <citation type="journal article" date="2000" name="Science">
        <title>The genome sequence of Drosophila melanogaster.</title>
        <authorList>
            <person name="Adams M.D."/>
            <person name="Celniker S.E."/>
            <person name="Holt R.A."/>
            <person name="Evans C.A."/>
            <person name="Gocayne J.D."/>
            <person name="Amanatides P.G."/>
            <person name="Scherer S.E."/>
            <person name="Li P.W."/>
            <person name="Hoskins R.A."/>
            <person name="Galle R.F."/>
            <person name="George R.A."/>
            <person name="Lewis S.E."/>
            <person name="Richards S."/>
            <person name="Ashburner M."/>
            <person name="Henderson S.N."/>
            <person name="Sutton G.G."/>
            <person name="Wortman J.R."/>
            <person name="Yandell M.D."/>
            <person name="Zhang Q."/>
            <person name="Chen L.X."/>
            <person name="Brandon R.C."/>
            <person name="Rogers Y.-H.C."/>
            <person name="Blazej R.G."/>
            <person name="Champe M."/>
            <person name="Pfeiffer B.D."/>
            <person name="Wan K.H."/>
            <person name="Doyle C."/>
            <person name="Baxter E.G."/>
            <person name="Helt G."/>
            <person name="Nelson C.R."/>
            <person name="Miklos G.L.G."/>
            <person name="Abril J.F."/>
            <person name="Agbayani A."/>
            <person name="An H.-J."/>
            <person name="Andrews-Pfannkoch C."/>
            <person name="Baldwin D."/>
            <person name="Ballew R.M."/>
            <person name="Basu A."/>
            <person name="Baxendale J."/>
            <person name="Bayraktaroglu L."/>
            <person name="Beasley E.M."/>
            <person name="Beeson K.Y."/>
            <person name="Benos P.V."/>
            <person name="Berman B.P."/>
            <person name="Bhandari D."/>
            <person name="Bolshakov S."/>
            <person name="Borkova D."/>
            <person name="Botchan M.R."/>
            <person name="Bouck J."/>
            <person name="Brokstein P."/>
            <person name="Brottier P."/>
            <person name="Burtis K.C."/>
            <person name="Busam D.A."/>
            <person name="Butler H."/>
            <person name="Cadieu E."/>
            <person name="Center A."/>
            <person name="Chandra I."/>
            <person name="Cherry J.M."/>
            <person name="Cawley S."/>
            <person name="Dahlke C."/>
            <person name="Davenport L.B."/>
            <person name="Davies P."/>
            <person name="de Pablos B."/>
            <person name="Delcher A."/>
            <person name="Deng Z."/>
            <person name="Mays A.D."/>
            <person name="Dew I."/>
            <person name="Dietz S.M."/>
            <person name="Dodson K."/>
            <person name="Doup L.E."/>
            <person name="Downes M."/>
            <person name="Dugan-Rocha S."/>
            <person name="Dunkov B.C."/>
            <person name="Dunn P."/>
            <person name="Durbin K.J."/>
            <person name="Evangelista C.C."/>
            <person name="Ferraz C."/>
            <person name="Ferriera S."/>
            <person name="Fleischmann W."/>
            <person name="Fosler C."/>
            <person name="Gabrielian A.E."/>
            <person name="Garg N.S."/>
            <person name="Gelbart W.M."/>
            <person name="Glasser K."/>
            <person name="Glodek A."/>
            <person name="Gong F."/>
            <person name="Gorrell J.H."/>
            <person name="Gu Z."/>
            <person name="Guan P."/>
            <person name="Harris M."/>
            <person name="Harris N.L."/>
            <person name="Harvey D.A."/>
            <person name="Heiman T.J."/>
            <person name="Hernandez J.R."/>
            <person name="Houck J."/>
            <person name="Hostin D."/>
            <person name="Houston K.A."/>
            <person name="Howland T.J."/>
            <person name="Wei M.-H."/>
            <person name="Ibegwam C."/>
            <person name="Jalali M."/>
            <person name="Kalush F."/>
            <person name="Karpen G.H."/>
            <person name="Ke Z."/>
            <person name="Kennison J.A."/>
            <person name="Ketchum K.A."/>
            <person name="Kimmel B.E."/>
            <person name="Kodira C.D."/>
            <person name="Kraft C.L."/>
            <person name="Kravitz S."/>
            <person name="Kulp D."/>
            <person name="Lai Z."/>
            <person name="Lasko P."/>
            <person name="Lei Y."/>
            <person name="Levitsky A.A."/>
            <person name="Li J.H."/>
            <person name="Li Z."/>
            <person name="Liang Y."/>
            <person name="Lin X."/>
            <person name="Liu X."/>
            <person name="Mattei B."/>
            <person name="McIntosh T.C."/>
            <person name="McLeod M.P."/>
            <person name="McPherson D."/>
            <person name="Merkulov G."/>
            <person name="Milshina N.V."/>
            <person name="Mobarry C."/>
            <person name="Morris J."/>
            <person name="Moshrefi A."/>
            <person name="Mount S.M."/>
            <person name="Moy M."/>
            <person name="Murphy B."/>
            <person name="Murphy L."/>
            <person name="Muzny D.M."/>
            <person name="Nelson D.L."/>
            <person name="Nelson D.R."/>
            <person name="Nelson K.A."/>
            <person name="Nixon K."/>
            <person name="Nusskern D.R."/>
            <person name="Pacleb J.M."/>
            <person name="Palazzolo M."/>
            <person name="Pittman G.S."/>
            <person name="Pan S."/>
            <person name="Pollard J."/>
            <person name="Puri V."/>
            <person name="Reese M.G."/>
            <person name="Reinert K."/>
            <person name="Remington K."/>
            <person name="Saunders R.D.C."/>
            <person name="Scheeler F."/>
            <person name="Shen H."/>
            <person name="Shue B.C."/>
            <person name="Siden-Kiamos I."/>
            <person name="Simpson M."/>
            <person name="Skupski M.P."/>
            <person name="Smith T.J."/>
            <person name="Spier E."/>
            <person name="Spradling A.C."/>
            <person name="Stapleton M."/>
            <person name="Strong R."/>
            <person name="Sun E."/>
            <person name="Svirskas R."/>
            <person name="Tector C."/>
            <person name="Turner R."/>
            <person name="Venter E."/>
            <person name="Wang A.H."/>
            <person name="Wang X."/>
            <person name="Wang Z.-Y."/>
            <person name="Wassarman D.A."/>
            <person name="Weinstock G.M."/>
            <person name="Weissenbach J."/>
            <person name="Williams S.M."/>
            <person name="Woodage T."/>
            <person name="Worley K.C."/>
            <person name="Wu D."/>
            <person name="Yang S."/>
            <person name="Yao Q.A."/>
            <person name="Ye J."/>
            <person name="Yeh R.-F."/>
            <person name="Zaveri J.S."/>
            <person name="Zhan M."/>
            <person name="Zhang G."/>
            <person name="Zhao Q."/>
            <person name="Zheng L."/>
            <person name="Zheng X.H."/>
            <person name="Zhong F.N."/>
            <person name="Zhong W."/>
            <person name="Zhou X."/>
            <person name="Zhu S.C."/>
            <person name="Zhu X."/>
            <person name="Smith H.O."/>
            <person name="Gibbs R.A."/>
            <person name="Myers E.W."/>
            <person name="Rubin G.M."/>
            <person name="Venter J.C."/>
        </authorList>
    </citation>
    <scope>NUCLEOTIDE SEQUENCE [LARGE SCALE GENOMIC DNA]</scope>
    <source>
        <strain>Berkeley</strain>
    </source>
</reference>
<reference key="2">
    <citation type="journal article" date="2002" name="Genome Biol.">
        <title>Annotation of the Drosophila melanogaster euchromatic genome: a systematic review.</title>
        <authorList>
            <person name="Misra S."/>
            <person name="Crosby M.A."/>
            <person name="Mungall C.J."/>
            <person name="Matthews B.B."/>
            <person name="Campbell K.S."/>
            <person name="Hradecky P."/>
            <person name="Huang Y."/>
            <person name="Kaminker J.S."/>
            <person name="Millburn G.H."/>
            <person name="Prochnik S.E."/>
            <person name="Smith C.D."/>
            <person name="Tupy J.L."/>
            <person name="Whitfield E.J."/>
            <person name="Bayraktaroglu L."/>
            <person name="Berman B.P."/>
            <person name="Bettencourt B.R."/>
            <person name="Celniker S.E."/>
            <person name="de Grey A.D.N.J."/>
            <person name="Drysdale R.A."/>
            <person name="Harris N.L."/>
            <person name="Richter J."/>
            <person name="Russo S."/>
            <person name="Schroeder A.J."/>
            <person name="Shu S.Q."/>
            <person name="Stapleton M."/>
            <person name="Yamada C."/>
            <person name="Ashburner M."/>
            <person name="Gelbart W.M."/>
            <person name="Rubin G.M."/>
            <person name="Lewis S.E."/>
        </authorList>
    </citation>
    <scope>GENOME REANNOTATION</scope>
    <source>
        <strain>Berkeley</strain>
    </source>
</reference>
<reference key="3">
    <citation type="journal article" date="2002" name="Genome Biol.">
        <title>A Drosophila full-length cDNA resource.</title>
        <authorList>
            <person name="Stapleton M."/>
            <person name="Carlson J.W."/>
            <person name="Brokstein P."/>
            <person name="Yu C."/>
            <person name="Champe M."/>
            <person name="George R.A."/>
            <person name="Guarin H."/>
            <person name="Kronmiller B."/>
            <person name="Pacleb J.M."/>
            <person name="Park S."/>
            <person name="Wan K.H."/>
            <person name="Rubin G.M."/>
            <person name="Celniker S.E."/>
        </authorList>
    </citation>
    <scope>NUCLEOTIDE SEQUENCE [LARGE SCALE MRNA]</scope>
    <source>
        <strain>Berkeley</strain>
        <tissue>Embryo</tissue>
        <tissue>Ovary</tissue>
    </source>
</reference>
<reference key="4">
    <citation type="submission" date="2009-01" db="EMBL/GenBank/DDBJ databases">
        <authorList>
            <person name="Carlson J.W."/>
            <person name="Booth B."/>
            <person name="Frise E."/>
            <person name="Park S."/>
            <person name="Wan K.H."/>
            <person name="Yu C."/>
            <person name="Celniker S.E."/>
        </authorList>
    </citation>
    <scope>NUCLEOTIDE SEQUENCE [LARGE SCALE MRNA]</scope>
    <source>
        <strain>Berkeley</strain>
    </source>
</reference>
<reference key="5">
    <citation type="journal article" date="2008" name="J. Proteome Res.">
        <title>Phosphoproteome analysis of Drosophila melanogaster embryos.</title>
        <authorList>
            <person name="Zhai B."/>
            <person name="Villen J."/>
            <person name="Beausoleil S.A."/>
            <person name="Mintseris J."/>
            <person name="Gygi S.P."/>
        </authorList>
    </citation>
    <scope>PHOSPHORYLATION [LARGE SCALE ANALYSIS] AT THR-106; THR-184; SER-190; SER-192; THR-217; SER-280; THR-283; SER-291; SER-301; SER-314; SER-353; THR-365; SER-487; SER-492; SER-730; SER-743; SER-747 AND SER-755</scope>
    <scope>IDENTIFICATION BY MASS SPECTROMETRY</scope>
    <source>
        <tissue>Embryo</tissue>
    </source>
</reference>
<reference key="6">
    <citation type="journal article" date="2007" name="Mol. Biosyst.">
        <title>An integrated chemical, mass spectrometric and computational strategy for (quantitative) phosphoproteomics: application to Drosophila melanogaster Kc167 cells.</title>
        <authorList>
            <person name="Bodenmiller B."/>
            <person name="Mueller L.N."/>
            <person name="Pedrioli P.G.A."/>
            <person name="Pflieger D."/>
            <person name="Juenger M.A."/>
            <person name="Eng J.K."/>
            <person name="Aebersold R."/>
            <person name="Tao W.A."/>
        </authorList>
    </citation>
    <scope>PHOSPHORYLATION [LARGE SCALE ANALYSIS] AT SER-553</scope>
    <scope>IDENTIFICATION BY MASS SPECTROMETRY</scope>
</reference>
<reference key="7">
    <citation type="journal article" date="2010" name="Genes Dev.">
        <title>CDK12 is a transcription elongation-associated CTD kinase, the metazoan ortholog of yeast Ctk1.</title>
        <authorList>
            <person name="Bartkowiak B."/>
            <person name="Liu P."/>
            <person name="Phatnani H.P."/>
            <person name="Fuda N.J."/>
            <person name="Cooper J.J."/>
            <person name="Price D.H."/>
            <person name="Adelman K."/>
            <person name="Lis J.T."/>
            <person name="Greenleaf A.L."/>
        </authorList>
    </citation>
    <scope>FUNCTION</scope>
    <scope>CATALYTIC ACTIVITY</scope>
    <scope>SUBCELLULAR LOCATION</scope>
    <scope>INTERACTION WITH CYCK</scope>
</reference>
<comment type="function">
    <text evidence="6">Cyclin-dependent kinase which displays CTD kinase activity: hyperphosphorylates the C-terminal heptapeptide repeat domain (CTD) of the largest RNA polymerase II subunit, thereby acting as a key regulator of transcription elongation.</text>
</comment>
<comment type="catalytic activity">
    <reaction evidence="6">
        <text>[DNA-directed RNA polymerase] + ATP = phospho-[DNA-directed RNA polymerase] + ADP + H(+)</text>
        <dbReference type="Rhea" id="RHEA:10216"/>
        <dbReference type="Rhea" id="RHEA-COMP:11321"/>
        <dbReference type="Rhea" id="RHEA-COMP:11322"/>
        <dbReference type="ChEBI" id="CHEBI:15378"/>
        <dbReference type="ChEBI" id="CHEBI:30616"/>
        <dbReference type="ChEBI" id="CHEBI:43176"/>
        <dbReference type="ChEBI" id="CHEBI:68546"/>
        <dbReference type="ChEBI" id="CHEBI:456216"/>
        <dbReference type="EC" id="2.7.11.23"/>
    </reaction>
</comment>
<comment type="catalytic activity">
    <reaction evidence="6">
        <text>L-seryl-[protein] + ATP = O-phospho-L-seryl-[protein] + ADP + H(+)</text>
        <dbReference type="Rhea" id="RHEA:17989"/>
        <dbReference type="Rhea" id="RHEA-COMP:9863"/>
        <dbReference type="Rhea" id="RHEA-COMP:11604"/>
        <dbReference type="ChEBI" id="CHEBI:15378"/>
        <dbReference type="ChEBI" id="CHEBI:29999"/>
        <dbReference type="ChEBI" id="CHEBI:30616"/>
        <dbReference type="ChEBI" id="CHEBI:83421"/>
        <dbReference type="ChEBI" id="CHEBI:456216"/>
        <dbReference type="EC" id="2.7.11.22"/>
    </reaction>
</comment>
<comment type="catalytic activity">
    <reaction evidence="6">
        <text>L-threonyl-[protein] + ATP = O-phospho-L-threonyl-[protein] + ADP + H(+)</text>
        <dbReference type="Rhea" id="RHEA:46608"/>
        <dbReference type="Rhea" id="RHEA-COMP:11060"/>
        <dbReference type="Rhea" id="RHEA-COMP:11605"/>
        <dbReference type="ChEBI" id="CHEBI:15378"/>
        <dbReference type="ChEBI" id="CHEBI:30013"/>
        <dbReference type="ChEBI" id="CHEBI:30616"/>
        <dbReference type="ChEBI" id="CHEBI:61977"/>
        <dbReference type="ChEBI" id="CHEBI:456216"/>
        <dbReference type="EC" id="2.7.11.22"/>
    </reaction>
</comment>
<comment type="subunit">
    <text evidence="6">Interacts with cyclin CycK.</text>
</comment>
<comment type="interaction">
    <interactant intactId="EBI-1627953">
        <id>Q9VP22</id>
    </interactant>
    <interactant intactId="EBI-130995">
        <id>Q961D1</id>
        <label>CycK</label>
    </interactant>
    <organismsDiffer>false</organismsDiffer>
    <experiments>3</experiments>
</comment>
<comment type="subcellular location">
    <subcellularLocation>
        <location evidence="6">Nucleus</location>
    </subcellularLocation>
    <subcellularLocation>
        <location evidence="6">Chromosome</location>
    </subcellularLocation>
    <text>Localizes to active genes.</text>
</comment>
<comment type="similarity">
    <text evidence="7">Belongs to the protein kinase superfamily. CMGC Ser/Thr protein kinase family. CDC2/CDKX subfamily.</text>
</comment>
<comment type="sequence caution" evidence="7">
    <conflict type="erroneous initiation">
        <sequence resource="EMBL-CDS" id="AAL28383"/>
    </conflict>
    <text>Truncated N-terminus.</text>
</comment>
<sequence>MHASSAAATALVEYSDVSSEDFSDQEAGDLDADAGKGAGNIKKPKPAPDNQFSKGRLDAKPDKEGYDNYRSRRAEDSSDPVAAGSRQTSSSEATNPREEPSQASNTSKDELWGREIYMSSDSIDTDELEAEMKRQKRKKQKKEKHKHKSKKKSKKRKKKRAKSYSSIDSMSDNDINALLDRRYTPPTAPSKSNERTVSAAPSSFTPHNLKESSSPATPPPVRRPNTNSNYYGESSLETANSALGSNLQVTVTNKQSISNRLRSPPPSSRSSGNGPRFGNSPRTPPPSHYSSSGGGGVGSGSVVRDSRSSRYVNSPHKEDVSAHHRSSHDHGYQGRYSGAGSSSHDTRKVKRLSPELDRYNHQPSTPPHKRRKFSDGREVGLGNFEHSRHHSGKYERYSRDRYSRRSSRSPSVQHSRSRQSPSGGLSSGSNAFRHGGSHKHKYGTTVSSTPSHTTRTSKRASGTGTSGDRYSRSPRTSSRYMESSPPSPVGASGSHHYHHRRSPRMRQRTRGDSRRRSPSSASSESSASRSRSPTSRDLKHKREEYIKKISETSLFAELVKDRHKRQKALKEIIERQEENSNSNSNGALTINDNSSSVDGNTPNAADGRSAPGSGTPAAASTTSNGLQALGSKPDLDLNNIPMPNKQNDSVVSNPASNADVPDSVAQLKQPLLVPPFSASKNNIKPKSLTSLPLPPGMNVLDLAGARSPSPGQKKESDEKNVTSSGSANKSVLNLPMPPVIPGSEELSGDDDVIDSPEDFDAPAVGTVHGHGGGPGTTRQRPVILNRRDSRNNVRDWGERCVDVFEMIAQIGEGTYGQVYKARDHHTNDMVALKKVRLEHEKEGFPITAVREIKILRQLNHRNIVNLHEIVTDKQDAVEFRKDKGSFYLVFEYMDHDLMGLLESGMVDFNEENNASIMKQLLDGLNYCHKKNFLHRDIKCSNILMNNRGKVKLADFGLARLYNADDRERPYTNKVITLWYRPPELLLGEERYGPSIDVWSCGCILGELFVKRPLFQANAEMAQLETISKICGSPVPAVWPNVIKLPLFHTLKQKKTHRRRLREDFEFMPAPALDLLDKMLDLDPDKRITAEDALRSPWLRKINPDEMPTPQLPTWQDCHELWSKKRRRQMREQQESLPPTVIASTKYQQHGATMVGDA</sequence>
<gene>
    <name type="primary">Cdk12</name>
    <name type="ORF">CG7597</name>
</gene>
<dbReference type="EC" id="2.7.11.22"/>
<dbReference type="EC" id="2.7.11.23"/>
<dbReference type="EMBL" id="AE014296">
    <property type="protein sequence ID" value="AAF51738.1"/>
    <property type="molecule type" value="Genomic_DNA"/>
</dbReference>
<dbReference type="EMBL" id="AE014296">
    <property type="protein sequence ID" value="AAN12171.1"/>
    <property type="molecule type" value="Genomic_DNA"/>
</dbReference>
<dbReference type="EMBL" id="AY060835">
    <property type="protein sequence ID" value="AAL28383.1"/>
    <property type="status" value="ALT_INIT"/>
    <property type="molecule type" value="mRNA"/>
</dbReference>
<dbReference type="EMBL" id="AY069806">
    <property type="protein sequence ID" value="AAL39951.1"/>
    <property type="molecule type" value="mRNA"/>
</dbReference>
<dbReference type="EMBL" id="BT058001">
    <property type="protein sequence ID" value="ACM16711.1"/>
    <property type="molecule type" value="mRNA"/>
</dbReference>
<dbReference type="RefSeq" id="NP_001262167.1">
    <property type="nucleotide sequence ID" value="NM_001275238.1"/>
</dbReference>
<dbReference type="RefSeq" id="NP_649325.2">
    <property type="nucleotide sequence ID" value="NM_141068.4"/>
</dbReference>
<dbReference type="RefSeq" id="NP_730643.1">
    <property type="nucleotide sequence ID" value="NM_168912.2"/>
</dbReference>
<dbReference type="SMR" id="Q9VP22"/>
<dbReference type="BioGRID" id="65630">
    <property type="interactions" value="4"/>
</dbReference>
<dbReference type="FunCoup" id="Q9VP22">
    <property type="interactions" value="289"/>
</dbReference>
<dbReference type="IntAct" id="Q9VP22">
    <property type="interactions" value="34"/>
</dbReference>
<dbReference type="STRING" id="7227.FBpp0078014"/>
<dbReference type="GlyGen" id="Q9VP22">
    <property type="glycosylation" value="2 sites"/>
</dbReference>
<dbReference type="iPTMnet" id="Q9VP22"/>
<dbReference type="PaxDb" id="7227-FBpp0078013"/>
<dbReference type="DNASU" id="40385"/>
<dbReference type="EnsemblMetazoa" id="FBtr0078357">
    <property type="protein sequence ID" value="FBpp0078013"/>
    <property type="gene ID" value="FBgn0037093"/>
</dbReference>
<dbReference type="EnsemblMetazoa" id="FBtr0078358">
    <property type="protein sequence ID" value="FBpp0078014"/>
    <property type="gene ID" value="FBgn0037093"/>
</dbReference>
<dbReference type="EnsemblMetazoa" id="FBtr0332716">
    <property type="protein sequence ID" value="FBpp0304962"/>
    <property type="gene ID" value="FBgn0037093"/>
</dbReference>
<dbReference type="GeneID" id="40385"/>
<dbReference type="KEGG" id="dme:Dmel_CG7597"/>
<dbReference type="UCSC" id="CG7597-RA">
    <property type="organism name" value="d. melanogaster"/>
</dbReference>
<dbReference type="AGR" id="FB:FBgn0037093"/>
<dbReference type="CTD" id="51755"/>
<dbReference type="FlyBase" id="FBgn0037093">
    <property type="gene designation" value="Cdk12"/>
</dbReference>
<dbReference type="VEuPathDB" id="VectorBase:FBgn0037093"/>
<dbReference type="eggNOG" id="KOG0600">
    <property type="taxonomic scope" value="Eukaryota"/>
</dbReference>
<dbReference type="GeneTree" id="ENSGT00940000157852"/>
<dbReference type="HOGENOM" id="CLU_007431_0_0_1"/>
<dbReference type="InParanoid" id="Q9VP22"/>
<dbReference type="OMA" id="PWLKKIN"/>
<dbReference type="OrthoDB" id="28397at2759"/>
<dbReference type="PhylomeDB" id="Q9VP22"/>
<dbReference type="BRENDA" id="2.7.11.23">
    <property type="organism ID" value="1994"/>
</dbReference>
<dbReference type="Reactome" id="R-DME-6796648">
    <property type="pathway name" value="TP53 Regulates Transcription of DNA Repair Genes"/>
</dbReference>
<dbReference type="Reactome" id="R-DME-6798695">
    <property type="pathway name" value="Neutrophil degranulation"/>
</dbReference>
<dbReference type="BioGRID-ORCS" id="40385">
    <property type="hits" value="1 hit in 3 CRISPR screens"/>
</dbReference>
<dbReference type="GenomeRNAi" id="40385"/>
<dbReference type="PRO" id="PR:Q9VP22"/>
<dbReference type="Proteomes" id="UP000000803">
    <property type="component" value="Chromosome 3L"/>
</dbReference>
<dbReference type="Bgee" id="FBgn0037093">
    <property type="expression patterns" value="Expressed in posterior terminal follicle cell in ovary and 250 other cell types or tissues"/>
</dbReference>
<dbReference type="ExpressionAtlas" id="Q9VP22">
    <property type="expression patterns" value="baseline and differential"/>
</dbReference>
<dbReference type="GO" id="GO:0008024">
    <property type="term" value="C:cyclin/CDK positive transcription elongation factor complex"/>
    <property type="evidence" value="ECO:0000318"/>
    <property type="project" value="GO_Central"/>
</dbReference>
<dbReference type="GO" id="GO:0000228">
    <property type="term" value="C:nuclear chromosome"/>
    <property type="evidence" value="ECO:0000314"/>
    <property type="project" value="UniProtKB"/>
</dbReference>
<dbReference type="GO" id="GO:0019908">
    <property type="term" value="C:nuclear cyclin-dependent protein kinase holoenzyme complex"/>
    <property type="evidence" value="ECO:0000314"/>
    <property type="project" value="UniProtKB"/>
</dbReference>
<dbReference type="GO" id="GO:0005634">
    <property type="term" value="C:nucleus"/>
    <property type="evidence" value="ECO:0000318"/>
    <property type="project" value="GO_Central"/>
</dbReference>
<dbReference type="GO" id="GO:0005700">
    <property type="term" value="C:polytene chromosome"/>
    <property type="evidence" value="ECO:0000314"/>
    <property type="project" value="FlyBase"/>
</dbReference>
<dbReference type="GO" id="GO:0005703">
    <property type="term" value="C:polytene chromosome puff"/>
    <property type="evidence" value="ECO:0000314"/>
    <property type="project" value="FlyBase"/>
</dbReference>
<dbReference type="GO" id="GO:0005524">
    <property type="term" value="F:ATP binding"/>
    <property type="evidence" value="ECO:0007669"/>
    <property type="project" value="UniProtKB-KW"/>
</dbReference>
<dbReference type="GO" id="GO:0030332">
    <property type="term" value="F:cyclin binding"/>
    <property type="evidence" value="ECO:0000353"/>
    <property type="project" value="UniProtKB"/>
</dbReference>
<dbReference type="GO" id="GO:0004693">
    <property type="term" value="F:cyclin-dependent protein serine/threonine kinase activity"/>
    <property type="evidence" value="ECO:0000250"/>
    <property type="project" value="FlyBase"/>
</dbReference>
<dbReference type="GO" id="GO:0106310">
    <property type="term" value="F:protein serine kinase activity"/>
    <property type="evidence" value="ECO:0007669"/>
    <property type="project" value="RHEA"/>
</dbReference>
<dbReference type="GO" id="GO:0008353">
    <property type="term" value="F:RNA polymerase II CTD heptapeptide repeat kinase activity"/>
    <property type="evidence" value="ECO:0000314"/>
    <property type="project" value="UniProtKB"/>
</dbReference>
<dbReference type="GO" id="GO:0045944">
    <property type="term" value="P:positive regulation of transcription by RNA polymerase II"/>
    <property type="evidence" value="ECO:0000314"/>
    <property type="project" value="UniProtKB"/>
</dbReference>
<dbReference type="GO" id="GO:0032968">
    <property type="term" value="P:positive regulation of transcription elongation by RNA polymerase II"/>
    <property type="evidence" value="ECO:0000318"/>
    <property type="project" value="GO_Central"/>
</dbReference>
<dbReference type="GO" id="GO:0006366">
    <property type="term" value="P:transcription by RNA polymerase II"/>
    <property type="evidence" value="ECO:0000315"/>
    <property type="project" value="FlyBase"/>
</dbReference>
<dbReference type="CDD" id="cd07864">
    <property type="entry name" value="STKc_CDK12"/>
    <property type="match status" value="1"/>
</dbReference>
<dbReference type="FunFam" id="1.10.510.10:FF:000102">
    <property type="entry name" value="cyclin-dependent kinase 12 isoform X1"/>
    <property type="match status" value="1"/>
</dbReference>
<dbReference type="FunFam" id="3.30.200.20:FF:000074">
    <property type="entry name" value="cyclin-dependent kinase 12 isoform X2"/>
    <property type="match status" value="1"/>
</dbReference>
<dbReference type="Gene3D" id="3.30.200.20">
    <property type="entry name" value="Phosphorylase Kinase, domain 1"/>
    <property type="match status" value="1"/>
</dbReference>
<dbReference type="Gene3D" id="1.10.510.10">
    <property type="entry name" value="Transferase(Phosphotransferase) domain 1"/>
    <property type="match status" value="1"/>
</dbReference>
<dbReference type="InterPro" id="IPR050108">
    <property type="entry name" value="CDK"/>
</dbReference>
<dbReference type="InterPro" id="IPR011009">
    <property type="entry name" value="Kinase-like_dom_sf"/>
</dbReference>
<dbReference type="InterPro" id="IPR000719">
    <property type="entry name" value="Prot_kinase_dom"/>
</dbReference>
<dbReference type="InterPro" id="IPR017441">
    <property type="entry name" value="Protein_kinase_ATP_BS"/>
</dbReference>
<dbReference type="InterPro" id="IPR008271">
    <property type="entry name" value="Ser/Thr_kinase_AS"/>
</dbReference>
<dbReference type="PANTHER" id="PTHR24056">
    <property type="entry name" value="CELL DIVISION PROTEIN KINASE"/>
    <property type="match status" value="1"/>
</dbReference>
<dbReference type="PANTHER" id="PTHR24056:SF546">
    <property type="entry name" value="CYCLIN-DEPENDENT KINASE 12"/>
    <property type="match status" value="1"/>
</dbReference>
<dbReference type="Pfam" id="PF00069">
    <property type="entry name" value="Pkinase"/>
    <property type="match status" value="1"/>
</dbReference>
<dbReference type="SMART" id="SM00220">
    <property type="entry name" value="S_TKc"/>
    <property type="match status" value="1"/>
</dbReference>
<dbReference type="SUPFAM" id="SSF56112">
    <property type="entry name" value="Protein kinase-like (PK-like)"/>
    <property type="match status" value="1"/>
</dbReference>
<dbReference type="PROSITE" id="PS00107">
    <property type="entry name" value="PROTEIN_KINASE_ATP"/>
    <property type="match status" value="1"/>
</dbReference>
<dbReference type="PROSITE" id="PS50011">
    <property type="entry name" value="PROTEIN_KINASE_DOM"/>
    <property type="match status" value="1"/>
</dbReference>
<dbReference type="PROSITE" id="PS00108">
    <property type="entry name" value="PROTEIN_KINASE_ST"/>
    <property type="match status" value="1"/>
</dbReference>
<protein>
    <recommendedName>
        <fullName>Cyclin-dependent kinase 12</fullName>
        <ecNumber>2.7.11.22</ecNumber>
        <ecNumber>2.7.11.23</ecNumber>
    </recommendedName>
    <alternativeName>
        <fullName>Cell division protein kinase 12</fullName>
        <shortName>dCdk12</shortName>
    </alternativeName>
</protein>
<keyword id="KW-0067">ATP-binding</keyword>
<keyword id="KW-0158">Chromosome</keyword>
<keyword id="KW-0418">Kinase</keyword>
<keyword id="KW-0547">Nucleotide-binding</keyword>
<keyword id="KW-0539">Nucleus</keyword>
<keyword id="KW-0597">Phosphoprotein</keyword>
<keyword id="KW-1185">Reference proteome</keyword>
<keyword id="KW-0723">Serine/threonine-protein kinase</keyword>
<keyword id="KW-0808">Transferase</keyword>